<comment type="subcellular location">
    <subcellularLocation>
        <location evidence="1">Virion tegument</location>
    </subcellularLocation>
    <subcellularLocation>
        <location evidence="1">Host nucleus matrix</location>
    </subcellularLocation>
</comment>
<comment type="induction">
    <text>Expressed late in the infection cycle.</text>
</comment>
<comment type="PTM">
    <text evidence="1">Phosphorylated.</text>
</comment>
<comment type="similarity">
    <text evidence="4">Belongs to the herpesviridae US10 family.</text>
</comment>
<sequence>CRVRQCALGVHESCPLARGAKLSPGQHPRPSHAVRGRTAPGTRSSRRRTCEDGTSGPRDPRGATVALLYPLCDQPSAHLQTLPLEHRPLFRVIVEASRESSRKGDAPPSRRTGTRIHRELKLAHNQWLRANRESAIWPWRTAAMNFVAALAPRLQTHQHMHDLLMTCAFWCCLAHAATCSCAGLYSTHCRHLFRAFGCGGPASATASG</sequence>
<accession>P30817</accession>
<dbReference type="EMBL" id="S75996">
    <property type="protein sequence ID" value="AAB21003.2"/>
    <property type="molecule type" value="Genomic_DNA"/>
</dbReference>
<dbReference type="PIR" id="PQ0278">
    <property type="entry name" value="PQ0278"/>
</dbReference>
<dbReference type="GO" id="GO:0044204">
    <property type="term" value="C:host cell nuclear matrix"/>
    <property type="evidence" value="ECO:0007669"/>
    <property type="project" value="UniProtKB-SubCell"/>
</dbReference>
<dbReference type="GO" id="GO:0019033">
    <property type="term" value="C:viral tegument"/>
    <property type="evidence" value="ECO:0007669"/>
    <property type="project" value="UniProtKB-SubCell"/>
</dbReference>
<dbReference type="GO" id="GO:0008270">
    <property type="term" value="F:zinc ion binding"/>
    <property type="evidence" value="ECO:0007669"/>
    <property type="project" value="UniProtKB-KW"/>
</dbReference>
<dbReference type="InterPro" id="IPR000714">
    <property type="entry name" value="EHV_Unk"/>
</dbReference>
<dbReference type="Pfam" id="PF02053">
    <property type="entry name" value="Gene66"/>
    <property type="match status" value="1"/>
</dbReference>
<dbReference type="PRINTS" id="PR00957">
    <property type="entry name" value="GENE66"/>
</dbReference>
<name>US10_CHV1</name>
<organismHost>
    <name type="scientific">Homo sapiens</name>
    <name type="common">Human</name>
    <dbReference type="NCBI Taxonomy" id="9606"/>
</organismHost>
<organismHost>
    <name type="scientific">Macaca fascicularis</name>
    <name type="common">Crab-eating macaque</name>
    <name type="synonym">Cynomolgus monkey</name>
    <dbReference type="NCBI Taxonomy" id="9541"/>
</organismHost>
<organismHost>
    <name type="scientific">Macaca leonina</name>
    <name type="common">Northern pig-tailed macaque</name>
    <name type="synonym">Macaca nemestrina leonina</name>
    <dbReference type="NCBI Taxonomy" id="90387"/>
</organismHost>
<organismHost>
    <name type="scientific">Macaca mulatta</name>
    <name type="common">Rhesus macaque</name>
    <dbReference type="NCBI Taxonomy" id="9544"/>
</organismHost>
<organismHost>
    <name type="scientific">Macaca nemestrina</name>
    <name type="common">Pig-tailed macaque</name>
    <dbReference type="NCBI Taxonomy" id="9545"/>
</organismHost>
<feature type="chain" id="PRO_0000116146" description="Virion protein US10 homolog">
    <location>
        <begin position="1" status="less than"/>
        <end position="208"/>
    </location>
</feature>
<feature type="zinc finger region" evidence="2">
    <location>
        <begin position="167"/>
        <end position="179"/>
    </location>
</feature>
<feature type="region of interest" description="Disordered" evidence="3">
    <location>
        <begin position="17"/>
        <end position="61"/>
    </location>
</feature>
<feature type="non-terminal residue">
    <location>
        <position position="1"/>
    </location>
</feature>
<keyword id="KW-1048">Host nucleus</keyword>
<keyword id="KW-0426">Late protein</keyword>
<keyword id="KW-0479">Metal-binding</keyword>
<keyword id="KW-0946">Virion</keyword>
<keyword id="KW-0920">Virion tegument</keyword>
<keyword id="KW-0862">Zinc</keyword>
<keyword id="KW-0863">Zinc-finger</keyword>
<evidence type="ECO:0000250" key="1"/>
<evidence type="ECO:0000255" key="2"/>
<evidence type="ECO:0000256" key="3">
    <source>
        <dbReference type="SAM" id="MobiDB-lite"/>
    </source>
</evidence>
<evidence type="ECO:0000305" key="4"/>
<protein>
    <recommendedName>
        <fullName>Virion protein US10 homolog</fullName>
    </recommendedName>
</protein>
<organism>
    <name type="scientific">Cercopithecine herpesvirus 1</name>
    <name type="common">CeHV-1</name>
    <name type="synonym">Simian herpes B virus</name>
    <dbReference type="NCBI Taxonomy" id="10325"/>
    <lineage>
        <taxon>Viruses</taxon>
        <taxon>Duplodnaviria</taxon>
        <taxon>Heunggongvirae</taxon>
        <taxon>Peploviricota</taxon>
        <taxon>Herviviricetes</taxon>
        <taxon>Herpesvirales</taxon>
        <taxon>Orthoherpesviridae</taxon>
        <taxon>Alphaherpesvirinae</taxon>
        <taxon>Simplexvirus</taxon>
        <taxon>Simplexvirus macacinealpha1</taxon>
    </lineage>
</organism>
<reference key="1">
    <citation type="journal article" date="1992" name="J. Gen. Virol.">
        <title>Nucleotide sequence analysis of a homologue of herpes simplex virus type 1 gene US9 found in the genome of simian herpes B virus.</title>
        <authorList>
            <person name="Killeen A.M."/>
            <person name="Harrington L."/>
            <person name="Wall L.V.M."/>
            <person name="Kelly D.C."/>
        </authorList>
    </citation>
    <scope>NUCLEOTIDE SEQUENCE [GENOMIC DNA]</scope>
</reference>
<proteinExistence type="evidence at transcript level"/>